<accession>Q87V14</accession>
<reference key="1">
    <citation type="journal article" date="2003" name="Proc. Natl. Acad. Sci. U.S.A.">
        <title>The complete genome sequence of the Arabidopsis and tomato pathogen Pseudomonas syringae pv. tomato DC3000.</title>
        <authorList>
            <person name="Buell C.R."/>
            <person name="Joardar V."/>
            <person name="Lindeberg M."/>
            <person name="Selengut J."/>
            <person name="Paulsen I.T."/>
            <person name="Gwinn M.L."/>
            <person name="Dodson R.J."/>
            <person name="DeBoy R.T."/>
            <person name="Durkin A.S."/>
            <person name="Kolonay J.F."/>
            <person name="Madupu R."/>
            <person name="Daugherty S.C."/>
            <person name="Brinkac L.M."/>
            <person name="Beanan M.J."/>
            <person name="Haft D.H."/>
            <person name="Nelson W.C."/>
            <person name="Davidsen T.M."/>
            <person name="Zafar N."/>
            <person name="Zhou L."/>
            <person name="Liu J."/>
            <person name="Yuan Q."/>
            <person name="Khouri H.M."/>
            <person name="Fedorova N.B."/>
            <person name="Tran B."/>
            <person name="Russell D."/>
            <person name="Berry K.J."/>
            <person name="Utterback T.R."/>
            <person name="Van Aken S.E."/>
            <person name="Feldblyum T.V."/>
            <person name="D'Ascenzo M."/>
            <person name="Deng W.-L."/>
            <person name="Ramos A.R."/>
            <person name="Alfano J.R."/>
            <person name="Cartinhour S."/>
            <person name="Chatterjee A.K."/>
            <person name="Delaney T.P."/>
            <person name="Lazarowitz S.G."/>
            <person name="Martin G.B."/>
            <person name="Schneider D.J."/>
            <person name="Tang X."/>
            <person name="Bender C.L."/>
            <person name="White O."/>
            <person name="Fraser C.M."/>
            <person name="Collmer A."/>
        </authorList>
    </citation>
    <scope>NUCLEOTIDE SEQUENCE [LARGE SCALE GENOMIC DNA]</scope>
    <source>
        <strain>ATCC BAA-871 / DC3000</strain>
    </source>
</reference>
<gene>
    <name evidence="1" type="primary">aroK</name>
    <name type="ordered locus">PSPTO_5127</name>
</gene>
<organism>
    <name type="scientific">Pseudomonas syringae pv. tomato (strain ATCC BAA-871 / DC3000)</name>
    <dbReference type="NCBI Taxonomy" id="223283"/>
    <lineage>
        <taxon>Bacteria</taxon>
        <taxon>Pseudomonadati</taxon>
        <taxon>Pseudomonadota</taxon>
        <taxon>Gammaproteobacteria</taxon>
        <taxon>Pseudomonadales</taxon>
        <taxon>Pseudomonadaceae</taxon>
        <taxon>Pseudomonas</taxon>
    </lineage>
</organism>
<protein>
    <recommendedName>
        <fullName evidence="1">Shikimate kinase</fullName>
        <shortName evidence="1">SK</shortName>
        <ecNumber evidence="1">2.7.1.71</ecNumber>
    </recommendedName>
</protein>
<sequence length="172" mass="19158">MRNLILVGPMGAGKSTIGRLLAKELRLPFKDSDKEIELRTGANIPWIFDKEGEPGFREREQAMIAELCEADGVVLATGGGAVMRTENRQALRAGGRVVYLHASIEQQVGRTARDRNRPLLRTADPARVLSELLAIRDPLYREIADVVIETDERPPRMVVLEILARLAELPPR</sequence>
<feature type="chain" id="PRO_0000192402" description="Shikimate kinase">
    <location>
        <begin position="1"/>
        <end position="172"/>
    </location>
</feature>
<feature type="binding site" evidence="1">
    <location>
        <begin position="11"/>
        <end position="16"/>
    </location>
    <ligand>
        <name>ATP</name>
        <dbReference type="ChEBI" id="CHEBI:30616"/>
    </ligand>
</feature>
<feature type="binding site" evidence="1">
    <location>
        <position position="15"/>
    </location>
    <ligand>
        <name>Mg(2+)</name>
        <dbReference type="ChEBI" id="CHEBI:18420"/>
    </ligand>
</feature>
<feature type="binding site" evidence="1">
    <location>
        <position position="33"/>
    </location>
    <ligand>
        <name>substrate</name>
    </ligand>
</feature>
<feature type="binding site" evidence="1">
    <location>
        <position position="57"/>
    </location>
    <ligand>
        <name>substrate</name>
    </ligand>
</feature>
<feature type="binding site" evidence="1">
    <location>
        <position position="79"/>
    </location>
    <ligand>
        <name>substrate</name>
    </ligand>
</feature>
<feature type="binding site" evidence="1">
    <location>
        <position position="117"/>
    </location>
    <ligand>
        <name>ATP</name>
        <dbReference type="ChEBI" id="CHEBI:30616"/>
    </ligand>
</feature>
<feature type="binding site" evidence="1">
    <location>
        <position position="136"/>
    </location>
    <ligand>
        <name>substrate</name>
    </ligand>
</feature>
<feature type="binding site" evidence="1">
    <location>
        <position position="153"/>
    </location>
    <ligand>
        <name>ATP</name>
        <dbReference type="ChEBI" id="CHEBI:30616"/>
    </ligand>
</feature>
<keyword id="KW-0028">Amino-acid biosynthesis</keyword>
<keyword id="KW-0057">Aromatic amino acid biosynthesis</keyword>
<keyword id="KW-0067">ATP-binding</keyword>
<keyword id="KW-0963">Cytoplasm</keyword>
<keyword id="KW-0418">Kinase</keyword>
<keyword id="KW-0460">Magnesium</keyword>
<keyword id="KW-0479">Metal-binding</keyword>
<keyword id="KW-0547">Nucleotide-binding</keyword>
<keyword id="KW-1185">Reference proteome</keyword>
<keyword id="KW-0808">Transferase</keyword>
<proteinExistence type="inferred from homology"/>
<comment type="function">
    <text evidence="1">Catalyzes the specific phosphorylation of the 3-hydroxyl group of shikimic acid using ATP as a cosubstrate.</text>
</comment>
<comment type="catalytic activity">
    <reaction evidence="1">
        <text>shikimate + ATP = 3-phosphoshikimate + ADP + H(+)</text>
        <dbReference type="Rhea" id="RHEA:13121"/>
        <dbReference type="ChEBI" id="CHEBI:15378"/>
        <dbReference type="ChEBI" id="CHEBI:30616"/>
        <dbReference type="ChEBI" id="CHEBI:36208"/>
        <dbReference type="ChEBI" id="CHEBI:145989"/>
        <dbReference type="ChEBI" id="CHEBI:456216"/>
        <dbReference type="EC" id="2.7.1.71"/>
    </reaction>
</comment>
<comment type="cofactor">
    <cofactor evidence="1">
        <name>Mg(2+)</name>
        <dbReference type="ChEBI" id="CHEBI:18420"/>
    </cofactor>
    <text evidence="1">Binds 1 Mg(2+) ion per subunit.</text>
</comment>
<comment type="pathway">
    <text evidence="1">Metabolic intermediate biosynthesis; chorismate biosynthesis; chorismate from D-erythrose 4-phosphate and phosphoenolpyruvate: step 5/7.</text>
</comment>
<comment type="subunit">
    <text evidence="1">Monomer.</text>
</comment>
<comment type="subcellular location">
    <subcellularLocation>
        <location evidence="1">Cytoplasm</location>
    </subcellularLocation>
</comment>
<comment type="similarity">
    <text evidence="1">Belongs to the shikimate kinase family.</text>
</comment>
<dbReference type="EC" id="2.7.1.71" evidence="1"/>
<dbReference type="EMBL" id="AE016853">
    <property type="protein sequence ID" value="AAO58554.1"/>
    <property type="molecule type" value="Genomic_DNA"/>
</dbReference>
<dbReference type="RefSeq" id="NP_794859.1">
    <property type="nucleotide sequence ID" value="NC_004578.1"/>
</dbReference>
<dbReference type="RefSeq" id="WP_007245596.1">
    <property type="nucleotide sequence ID" value="NC_004578.1"/>
</dbReference>
<dbReference type="SMR" id="Q87V14"/>
<dbReference type="STRING" id="223283.PSPTO_5127"/>
<dbReference type="GeneID" id="1186812"/>
<dbReference type="KEGG" id="pst:PSPTO_5127"/>
<dbReference type="PATRIC" id="fig|223283.9.peg.5246"/>
<dbReference type="eggNOG" id="COG0703">
    <property type="taxonomic scope" value="Bacteria"/>
</dbReference>
<dbReference type="HOGENOM" id="CLU_057607_2_2_6"/>
<dbReference type="OrthoDB" id="9800332at2"/>
<dbReference type="PhylomeDB" id="Q87V14"/>
<dbReference type="UniPathway" id="UPA00053">
    <property type="reaction ID" value="UER00088"/>
</dbReference>
<dbReference type="Proteomes" id="UP000002515">
    <property type="component" value="Chromosome"/>
</dbReference>
<dbReference type="GO" id="GO:0005829">
    <property type="term" value="C:cytosol"/>
    <property type="evidence" value="ECO:0007669"/>
    <property type="project" value="TreeGrafter"/>
</dbReference>
<dbReference type="GO" id="GO:0005524">
    <property type="term" value="F:ATP binding"/>
    <property type="evidence" value="ECO:0007669"/>
    <property type="project" value="UniProtKB-UniRule"/>
</dbReference>
<dbReference type="GO" id="GO:0000287">
    <property type="term" value="F:magnesium ion binding"/>
    <property type="evidence" value="ECO:0007669"/>
    <property type="project" value="UniProtKB-UniRule"/>
</dbReference>
<dbReference type="GO" id="GO:0004765">
    <property type="term" value="F:shikimate kinase activity"/>
    <property type="evidence" value="ECO:0007669"/>
    <property type="project" value="UniProtKB-UniRule"/>
</dbReference>
<dbReference type="GO" id="GO:0008652">
    <property type="term" value="P:amino acid biosynthetic process"/>
    <property type="evidence" value="ECO:0007669"/>
    <property type="project" value="UniProtKB-KW"/>
</dbReference>
<dbReference type="GO" id="GO:0009073">
    <property type="term" value="P:aromatic amino acid family biosynthetic process"/>
    <property type="evidence" value="ECO:0007669"/>
    <property type="project" value="UniProtKB-KW"/>
</dbReference>
<dbReference type="GO" id="GO:0009423">
    <property type="term" value="P:chorismate biosynthetic process"/>
    <property type="evidence" value="ECO:0007669"/>
    <property type="project" value="UniProtKB-UniRule"/>
</dbReference>
<dbReference type="CDD" id="cd00464">
    <property type="entry name" value="SK"/>
    <property type="match status" value="1"/>
</dbReference>
<dbReference type="Gene3D" id="3.40.50.300">
    <property type="entry name" value="P-loop containing nucleotide triphosphate hydrolases"/>
    <property type="match status" value="1"/>
</dbReference>
<dbReference type="HAMAP" id="MF_00109">
    <property type="entry name" value="Shikimate_kinase"/>
    <property type="match status" value="1"/>
</dbReference>
<dbReference type="InterPro" id="IPR027417">
    <property type="entry name" value="P-loop_NTPase"/>
</dbReference>
<dbReference type="InterPro" id="IPR031322">
    <property type="entry name" value="Shikimate/glucono_kinase"/>
</dbReference>
<dbReference type="InterPro" id="IPR000623">
    <property type="entry name" value="Shikimate_kinase/TSH1"/>
</dbReference>
<dbReference type="InterPro" id="IPR023000">
    <property type="entry name" value="Shikimate_kinase_CS"/>
</dbReference>
<dbReference type="NCBIfam" id="NF003456">
    <property type="entry name" value="PRK05057.1"/>
    <property type="match status" value="1"/>
</dbReference>
<dbReference type="PANTHER" id="PTHR21087">
    <property type="entry name" value="SHIKIMATE KINASE"/>
    <property type="match status" value="1"/>
</dbReference>
<dbReference type="PANTHER" id="PTHR21087:SF16">
    <property type="entry name" value="SHIKIMATE KINASE 1, CHLOROPLASTIC"/>
    <property type="match status" value="1"/>
</dbReference>
<dbReference type="Pfam" id="PF01202">
    <property type="entry name" value="SKI"/>
    <property type="match status" value="1"/>
</dbReference>
<dbReference type="PRINTS" id="PR01100">
    <property type="entry name" value="SHIKIMTKNASE"/>
</dbReference>
<dbReference type="SUPFAM" id="SSF52540">
    <property type="entry name" value="P-loop containing nucleoside triphosphate hydrolases"/>
    <property type="match status" value="1"/>
</dbReference>
<dbReference type="PROSITE" id="PS01128">
    <property type="entry name" value="SHIKIMATE_KINASE"/>
    <property type="match status" value="1"/>
</dbReference>
<name>AROK_PSESM</name>
<evidence type="ECO:0000255" key="1">
    <source>
        <dbReference type="HAMAP-Rule" id="MF_00109"/>
    </source>
</evidence>